<organism>
    <name type="scientific">Californiconus californicus</name>
    <name type="common">California cone</name>
    <name type="synonym">Conus californicus</name>
    <dbReference type="NCBI Taxonomy" id="1736779"/>
    <lineage>
        <taxon>Eukaryota</taxon>
        <taxon>Metazoa</taxon>
        <taxon>Spiralia</taxon>
        <taxon>Lophotrochozoa</taxon>
        <taxon>Mollusca</taxon>
        <taxon>Gastropoda</taxon>
        <taxon>Caenogastropoda</taxon>
        <taxon>Neogastropoda</taxon>
        <taxon>Conoidea</taxon>
        <taxon>Conidae</taxon>
        <taxon>Californiconus</taxon>
    </lineage>
</organism>
<accession>D3JYA5</accession>
<feature type="signal peptide" evidence="1">
    <location>
        <begin position="1"/>
        <end position="19"/>
    </location>
</feature>
<feature type="propeptide" id="PRO_0000414995" evidence="4">
    <location>
        <begin position="20"/>
        <end position="38"/>
    </location>
</feature>
<feature type="peptide" id="PRO_5000570822" description="Conotoxin Cal8.1" evidence="4">
    <location>
        <begin position="39"/>
        <end position="131"/>
    </location>
</feature>
<name>CU81_CONCL</name>
<comment type="function">
    <text evidence="3">Probable neurotoxin with unknown target. Possibly targets ion channels.</text>
</comment>
<comment type="subcellular location">
    <subcellularLocation>
        <location evidence="4">Secreted</location>
    </subcellularLocation>
</comment>
<comment type="tissue specificity">
    <text evidence="4">Expressed by the venom duct.</text>
</comment>
<comment type="domain">
    <text>The cysteine framework is C-C-C-C-C-C-C-C-C.</text>
</comment>
<comment type="PTM">
    <text evidence="3">Contains 4 disulfide bonds.</text>
</comment>
<dbReference type="EMBL" id="GU332643">
    <property type="protein sequence ID" value="ADC35041.1"/>
    <property type="molecule type" value="mRNA"/>
</dbReference>
<dbReference type="ConoServer" id="4055">
    <property type="toxin name" value="Cal8.1 precursor"/>
</dbReference>
<dbReference type="GO" id="GO:0005576">
    <property type="term" value="C:extracellular region"/>
    <property type="evidence" value="ECO:0007669"/>
    <property type="project" value="UniProtKB-SubCell"/>
</dbReference>
<dbReference type="GO" id="GO:0099106">
    <property type="term" value="F:ion channel regulator activity"/>
    <property type="evidence" value="ECO:0007669"/>
    <property type="project" value="UniProtKB-KW"/>
</dbReference>
<dbReference type="GO" id="GO:0090729">
    <property type="term" value="F:toxin activity"/>
    <property type="evidence" value="ECO:0007669"/>
    <property type="project" value="UniProtKB-KW"/>
</dbReference>
<evidence type="ECO:0000255" key="1"/>
<evidence type="ECO:0000303" key="2">
    <source>
    </source>
</evidence>
<evidence type="ECO:0000305" key="3"/>
<evidence type="ECO:0000305" key="4">
    <source>
    </source>
</evidence>
<keyword id="KW-1015">Disulfide bond</keyword>
<keyword id="KW-0872">Ion channel impairing toxin</keyword>
<keyword id="KW-0528">Neurotoxin</keyword>
<keyword id="KW-0964">Secreted</keyword>
<keyword id="KW-0732">Signal</keyword>
<keyword id="KW-0800">Toxin</keyword>
<reference key="1">
    <citation type="journal article" date="2011" name="Toxicon">
        <title>Diversity of conotoxin types from Conus californicus reflects a diversity of prey types and a novel evolutionary history.</title>
        <authorList>
            <person name="Elliger C.A."/>
            <person name="Richmond T.A."/>
            <person name="Lebaric Z.N."/>
            <person name="Pierce N.T."/>
            <person name="Sweedler J.V."/>
            <person name="Gilly W.F."/>
        </authorList>
    </citation>
    <scope>NUCLEOTIDE SEQUENCE [MRNA]</scope>
    <source>
        <tissue>Venom duct</tissue>
    </source>
</reference>
<proteinExistence type="evidence at transcript level"/>
<sequence length="131" mass="14872">MKLLLTLLLGSALMCITLADECGLGTHRPVKEVIDNVRTMYYCDCRAGDAERSITVSRCDDNNQKQDDVILTYCGLEQTTGCNTNPYTAAKHDSSGDKPQFYCSCLNYKYEQSHSDYRHWTIRCYMGNICD</sequence>
<protein>
    <recommendedName>
        <fullName evidence="3">Conotoxin Cal8.1</fullName>
    </recommendedName>
    <alternativeName>
        <fullName evidence="2">Conotoxin CalMKLL-1</fullName>
    </alternativeName>
</protein>